<keyword id="KW-1003">Cell membrane</keyword>
<keyword id="KW-0968">Cytoplasmic vesicle</keyword>
<keyword id="KW-0325">Glycoprotein</keyword>
<keyword id="KW-0472">Membrane</keyword>
<keyword id="KW-0539">Nucleus</keyword>
<keyword id="KW-1267">Proteomics identification</keyword>
<keyword id="KW-1185">Reference proteome</keyword>
<keyword id="KW-0732">Signal</keyword>
<keyword id="KW-0812">Transmembrane</keyword>
<keyword id="KW-1133">Transmembrane helix</keyword>
<sequence>MRPGPALLLLGVGLSLSVGRLPLPPVPRGAQAAVSGAPGGLLRGAPGLGVRGGRALLSLRPSAVRAGGAVLSGRGSLCFPHGGTGRRWYCLDLRVLLSAQRLPWPAAPALALVDLQLSARGGRLSLTWSVRLPRSPGRLAWAFRLRLLGPGAARPASPAARVSPRSAAPGPRPQQGFVARTECPTDGPARVMLQAVNSSSHRAVESSVSCQINACVIQRVRINTDQKGAPVRLSMQAEATINASVQLDCPAARAIAQYWQVFSVPAVGQAPDWTQPLDLPQLEIRNSPLFIHIPNNSLQWGVYVFNFTVSITTGNPKMPEVKDSDAVYVWIVRSSLQAVMLGDANITANFTEQLILDGSTSSDPDADSPLQGLQFFWYCTTDPRNYGGDRIILGSKEVCHPEQANLKWPWASGPVLTLLPETLKGDHVYFFRMVIRKDSRTAFSDKRVHVLQGPKAIAHITCIENCERNFIVSDRFSLFLNCTNCASRDFYKWSILSSSGGEMLFDWMGETVTGRNGAYLSIKAFAFRHFLEAEFSISLYLACWSGVTSVFRHSFIINHGPQIGECKINPAKGIALITKFVVQCSNFRDKHVPLTYKIIVSDLHSVGEISSVKENTLGTILYLGPQSTVPPSFLPVGMLASQYGLKIYAQVYDSLGAFSQVTLHATAQAPTDKNSSKTVLNQLLSFTVGPSSLLSTLIQKKDFLPAGYLLYIVASVLNNMKTELPLRDDRVNLRKHLIDQSFLLPVSTLVEIGQVVMTITKLTQKPSEFTWDAQKRATMRVWQANQALQEYQQKDKRFRSEQIEIVSTGILMSLSNILKMTSPHQVVKDPFYVIESLSDTILANKVPGNKTTSMRTPNFNMYVKKVEKWGINQLFRNEKHCRNCFYPTLNVSSVPGLSANGPISTMFCDFTNDLFPWLNDQENTSVEVSGFRMTGVADNGSVLEITPDVAEVYLVRKNLTFAAFNLTVGPNSEVDGSLKKTTGGFSFQVDSTVLREVLVHIVTEVMVLFTVLVYTGSQITPTALVATFLVPHDIPPFASQSALFDPACTVKKARVVCLPVSLLQLIAQHSHSPHCTVSIVLQAPRFVMKLNDKLVRISIFSVQCLDMYGIQSEWREGYCILGEKTSWYEVHCICKNVVRARRQLGTIGLTGIHLHTHYVMAKVIVIPNPVDLRLNIIKSLHQNPVTLFTVLFIILLYVGLAFWALYRDEMDQHLRGHVIVLPDNDPYDNLCYLVTIFTGSRWGSGTRANVFVQLRGTVSTSDVHCLSHPHFTTLYRGSINTFLLTTKSDLGDIHSIRVWHNNEGRSPSWYLSRIKVENLFSRHIWLFICQKWLSVDTTLDRTFHVTHPDERLTRKDFFFIDVSSNLRKNHMWFSIFASVVAKTFNRLQRLSCCLAMLLSSLLCNIMFFNLNRQEQTESRERKYMRSMMIGIESVLITIPVQLLITFLFTCSQRKPQADLKEVSPQKHPLMSEASEHWEEYLRKWHAYETAKVHPREVAKPASKGKPRLPKASPKATSKPKHRHRKAQIKTPETLGPNTNSNNNIEDDQDVHSEQHPSQKDLQQLKKKPRIVLPWWCVYVAWFLVFATSSISSFFIVFYGLTYGYDKSIEWLFASFCSFCQSVLLVQPSKIILLSGFRTNKPKYCKNLSWSTKYKYTEIRLDGMRMHPEEMQRIHDQIVRIRGTRMYQPLTEDEIRIFKRKKRIKRRALLFLSYILTHFIFLALLLILIVLLRHTDCFYYNQFIRDRFSMDLATVTKLEDIYRWLNSVLLPLLHNDLNPTFLPESSSKILGLPLMRQVRAKSSEKMCLPAEKFVQNSIRREIHCHPKYGIDPEDTKNYSGFWNEVDKQAIDESTNGFTYKPQGTQWLYYSYGLLHTYGSGGYALYFFPEQQRFNSTLRLKELQESNWLDEKTWAVVLELTTFNPDINLFCSISVIFEVSQLGVVNTSISLHSFSLADFDRKASAEIYLYVAILIFFLAYVVDEGCIIMQERASYVRSVYNLLNFALKCIFTVLIVLFLRKHFLATGIIRFYLSNPEDFIPFHAVSQVDHIMRIILGFLLFLTILKTLRYSRFFYDVRLAQRAIQAALPGICHMAFVVSVYFFVYMAFGYLVFGQHEWNYSNLIHSTQTVFSYCVSAFQNTEFSNNRILGVLFLSSFMLVMICVLINLFQAVILSAYEEMKQPVYEEPSDEVEAMTYLCRKLRTMFSFLTSQSKAKDEPEFFIDMLYGQPEKNSHRYLGLKTRNINGKKMVYLVV</sequence>
<gene>
    <name evidence="10" type="primary">PKDREJ</name>
</gene>
<protein>
    <recommendedName>
        <fullName evidence="10">Polycystin family receptor for egg jelly</fullName>
    </recommendedName>
    <alternativeName>
        <fullName>PKD and REJ homolog</fullName>
    </alternativeName>
    <alternativeName>
        <fullName>Polycystic kidney disease and receptor for egg jelly-related protein</fullName>
    </alternativeName>
</protein>
<reference key="1">
    <citation type="journal article" date="1999" name="Hum. Mol. Genet.">
        <title>Identification of a human homologue of the sea urchin receptor for egg jelly: a polycystic kidney disease-like protein.</title>
        <authorList>
            <person name="Hughes J."/>
            <person name="Ward C.J."/>
            <person name="Aspinwall R."/>
            <person name="Butler R."/>
            <person name="Harris P.C."/>
        </authorList>
    </citation>
    <scope>NUCLEOTIDE SEQUENCE [MRNA]</scope>
    <scope>TISSUE SPECIFICITY</scope>
    <source>
        <tissue>Testis</tissue>
    </source>
</reference>
<reference key="2">
    <citation type="journal article" date="1999" name="Nature">
        <title>The DNA sequence of human chromosome 22.</title>
        <authorList>
            <person name="Dunham I."/>
            <person name="Hunt A.R."/>
            <person name="Collins J.E."/>
            <person name="Bruskiewich R."/>
            <person name="Beare D.M."/>
            <person name="Clamp M."/>
            <person name="Smink L.J."/>
            <person name="Ainscough R."/>
            <person name="Almeida J.P."/>
            <person name="Babbage A.K."/>
            <person name="Bagguley C."/>
            <person name="Bailey J."/>
            <person name="Barlow K.F."/>
            <person name="Bates K.N."/>
            <person name="Beasley O.P."/>
            <person name="Bird C.P."/>
            <person name="Blakey S.E."/>
            <person name="Bridgeman A.M."/>
            <person name="Buck D."/>
            <person name="Burgess J."/>
            <person name="Burrill W.D."/>
            <person name="Burton J."/>
            <person name="Carder C."/>
            <person name="Carter N.P."/>
            <person name="Chen Y."/>
            <person name="Clark G."/>
            <person name="Clegg S.M."/>
            <person name="Cobley V.E."/>
            <person name="Cole C.G."/>
            <person name="Collier R.E."/>
            <person name="Connor R."/>
            <person name="Conroy D."/>
            <person name="Corby N.R."/>
            <person name="Coville G.J."/>
            <person name="Cox A.V."/>
            <person name="Davis J."/>
            <person name="Dawson E."/>
            <person name="Dhami P.D."/>
            <person name="Dockree C."/>
            <person name="Dodsworth S.J."/>
            <person name="Durbin R.M."/>
            <person name="Ellington A.G."/>
            <person name="Evans K.L."/>
            <person name="Fey J.M."/>
            <person name="Fleming K."/>
            <person name="French L."/>
            <person name="Garner A.A."/>
            <person name="Gilbert J.G.R."/>
            <person name="Goward M.E."/>
            <person name="Grafham D.V."/>
            <person name="Griffiths M.N.D."/>
            <person name="Hall C."/>
            <person name="Hall R.E."/>
            <person name="Hall-Tamlyn G."/>
            <person name="Heathcott R.W."/>
            <person name="Ho S."/>
            <person name="Holmes S."/>
            <person name="Hunt S.E."/>
            <person name="Jones M.C."/>
            <person name="Kershaw J."/>
            <person name="Kimberley A.M."/>
            <person name="King A."/>
            <person name="Laird G.K."/>
            <person name="Langford C.F."/>
            <person name="Leversha M.A."/>
            <person name="Lloyd C."/>
            <person name="Lloyd D.M."/>
            <person name="Martyn I.D."/>
            <person name="Mashreghi-Mohammadi M."/>
            <person name="Matthews L.H."/>
            <person name="Mccann O.T."/>
            <person name="Mcclay J."/>
            <person name="Mclaren S."/>
            <person name="McMurray A.A."/>
            <person name="Milne S.A."/>
            <person name="Mortimore B.J."/>
            <person name="Odell C.N."/>
            <person name="Pavitt R."/>
            <person name="Pearce A.V."/>
            <person name="Pearson D."/>
            <person name="Phillimore B.J.C.T."/>
            <person name="Phillips S.H."/>
            <person name="Plumb R.W."/>
            <person name="Ramsay H."/>
            <person name="Ramsey Y."/>
            <person name="Rogers L."/>
            <person name="Ross M.T."/>
            <person name="Scott C.E."/>
            <person name="Sehra H.K."/>
            <person name="Skuce C.D."/>
            <person name="Smalley S."/>
            <person name="Smith M.L."/>
            <person name="Soderlund C."/>
            <person name="Spragon L."/>
            <person name="Steward C.A."/>
            <person name="Sulston J.E."/>
            <person name="Swann R.M."/>
            <person name="Vaudin M."/>
            <person name="Wall M."/>
            <person name="Wallis J.M."/>
            <person name="Whiteley M.N."/>
            <person name="Willey D.L."/>
            <person name="Williams L."/>
            <person name="Williams S.A."/>
            <person name="Williamson H."/>
            <person name="Wilmer T.E."/>
            <person name="Wilming L."/>
            <person name="Wright C.L."/>
            <person name="Hubbard T."/>
            <person name="Bentley D.R."/>
            <person name="Beck S."/>
            <person name="Rogers J."/>
            <person name="Shimizu N."/>
            <person name="Minoshima S."/>
            <person name="Kawasaki K."/>
            <person name="Sasaki T."/>
            <person name="Asakawa S."/>
            <person name="Kudoh J."/>
            <person name="Shintani A."/>
            <person name="Shibuya K."/>
            <person name="Yoshizaki Y."/>
            <person name="Aoki N."/>
            <person name="Mitsuyama S."/>
            <person name="Roe B.A."/>
            <person name="Chen F."/>
            <person name="Chu L."/>
            <person name="Crabtree J."/>
            <person name="Deschamps S."/>
            <person name="Do A."/>
            <person name="Do T."/>
            <person name="Dorman A."/>
            <person name="Fang F."/>
            <person name="Fu Y."/>
            <person name="Hu P."/>
            <person name="Hua A."/>
            <person name="Kenton S."/>
            <person name="Lai H."/>
            <person name="Lao H.I."/>
            <person name="Lewis J."/>
            <person name="Lewis S."/>
            <person name="Lin S.-P."/>
            <person name="Loh P."/>
            <person name="Malaj E."/>
            <person name="Nguyen T."/>
            <person name="Pan H."/>
            <person name="Phan S."/>
            <person name="Qi S."/>
            <person name="Qian Y."/>
            <person name="Ray L."/>
            <person name="Ren Q."/>
            <person name="Shaull S."/>
            <person name="Sloan D."/>
            <person name="Song L."/>
            <person name="Wang Q."/>
            <person name="Wang Y."/>
            <person name="Wang Z."/>
            <person name="White J."/>
            <person name="Willingham D."/>
            <person name="Wu H."/>
            <person name="Yao Z."/>
            <person name="Zhan M."/>
            <person name="Zhang G."/>
            <person name="Chissoe S."/>
            <person name="Murray J."/>
            <person name="Miller N."/>
            <person name="Minx P."/>
            <person name="Fulton R."/>
            <person name="Johnson D."/>
            <person name="Bemis G."/>
            <person name="Bentley D."/>
            <person name="Bradshaw H."/>
            <person name="Bourne S."/>
            <person name="Cordes M."/>
            <person name="Du Z."/>
            <person name="Fulton L."/>
            <person name="Goela D."/>
            <person name="Graves T."/>
            <person name="Hawkins J."/>
            <person name="Hinds K."/>
            <person name="Kemp K."/>
            <person name="Latreille P."/>
            <person name="Layman D."/>
            <person name="Ozersky P."/>
            <person name="Rohlfing T."/>
            <person name="Scheet P."/>
            <person name="Walker C."/>
            <person name="Wamsley A."/>
            <person name="Wohldmann P."/>
            <person name="Pepin K."/>
            <person name="Nelson J."/>
            <person name="Korf I."/>
            <person name="Bedell J.A."/>
            <person name="Hillier L.W."/>
            <person name="Mardis E."/>
            <person name="Waterston R."/>
            <person name="Wilson R."/>
            <person name="Emanuel B.S."/>
            <person name="Shaikh T."/>
            <person name="Kurahashi H."/>
            <person name="Saitta S."/>
            <person name="Budarf M.L."/>
            <person name="McDermid H.E."/>
            <person name="Johnson A."/>
            <person name="Wong A.C.C."/>
            <person name="Morrow B.E."/>
            <person name="Edelmann L."/>
            <person name="Kim U.J."/>
            <person name="Shizuya H."/>
            <person name="Simon M.I."/>
            <person name="Dumanski J.P."/>
            <person name="Peyrard M."/>
            <person name="Kedra D."/>
            <person name="Seroussi E."/>
            <person name="Fransson I."/>
            <person name="Tapia I."/>
            <person name="Bruder C.E."/>
            <person name="O'Brien K.P."/>
            <person name="Wilkinson P."/>
            <person name="Bodenteich A."/>
            <person name="Hartman K."/>
            <person name="Hu X."/>
            <person name="Khan A.S."/>
            <person name="Lane L."/>
            <person name="Tilahun Y."/>
            <person name="Wright H."/>
        </authorList>
    </citation>
    <scope>NUCLEOTIDE SEQUENCE [LARGE SCALE GENOMIC DNA]</scope>
</reference>
<reference key="3">
    <citation type="submission" date="2005-07" db="EMBL/GenBank/DDBJ databases">
        <authorList>
            <person name="Mural R.J."/>
            <person name="Istrail S."/>
            <person name="Sutton G.G."/>
            <person name="Florea L."/>
            <person name="Halpern A.L."/>
            <person name="Mobarry C.M."/>
            <person name="Lippert R."/>
            <person name="Walenz B."/>
            <person name="Shatkay H."/>
            <person name="Dew I."/>
            <person name="Miller J.R."/>
            <person name="Flanigan M.J."/>
            <person name="Edwards N.J."/>
            <person name="Bolanos R."/>
            <person name="Fasulo D."/>
            <person name="Halldorsson B.V."/>
            <person name="Hannenhalli S."/>
            <person name="Turner R."/>
            <person name="Yooseph S."/>
            <person name="Lu F."/>
            <person name="Nusskern D.R."/>
            <person name="Shue B.C."/>
            <person name="Zheng X.H."/>
            <person name="Zhong F."/>
            <person name="Delcher A.L."/>
            <person name="Huson D.H."/>
            <person name="Kravitz S.A."/>
            <person name="Mouchard L."/>
            <person name="Reinert K."/>
            <person name="Remington K.A."/>
            <person name="Clark A.G."/>
            <person name="Waterman M.S."/>
            <person name="Eichler E.E."/>
            <person name="Adams M.D."/>
            <person name="Hunkapiller M.W."/>
            <person name="Myers E.W."/>
            <person name="Venter J.C."/>
        </authorList>
    </citation>
    <scope>NUCLEOTIDE SEQUENCE [LARGE SCALE GENOMIC DNA]</scope>
</reference>
<reference key="4">
    <citation type="journal article" date="2007" name="BMC Genomics">
        <title>The full-ORF clone resource of the German cDNA consortium.</title>
        <authorList>
            <person name="Bechtel S."/>
            <person name="Rosenfelder H."/>
            <person name="Duda A."/>
            <person name="Schmidt C.P."/>
            <person name="Ernst U."/>
            <person name="Wellenreuther R."/>
            <person name="Mehrle A."/>
            <person name="Schuster C."/>
            <person name="Bahr A."/>
            <person name="Bloecker H."/>
            <person name="Heubner D."/>
            <person name="Hoerlein A."/>
            <person name="Michel G."/>
            <person name="Wedler H."/>
            <person name="Koehrer K."/>
            <person name="Ottenwaelder B."/>
            <person name="Poustka A."/>
            <person name="Wiemann S."/>
            <person name="Schupp I."/>
        </authorList>
    </citation>
    <scope>NUCLEOTIDE SEQUENCE [LARGE SCALE MRNA] OF 1829-2253</scope>
    <source>
        <tissue>Testis</tissue>
    </source>
</reference>
<reference key="5">
    <citation type="journal article" date="2006" name="Science">
        <title>The consensus coding sequences of human breast and colorectal cancers.</title>
        <authorList>
            <person name="Sjoeblom T."/>
            <person name="Jones S."/>
            <person name="Wood L.D."/>
            <person name="Parsons D.W."/>
            <person name="Lin J."/>
            <person name="Barber T.D."/>
            <person name="Mandelker D."/>
            <person name="Leary R.J."/>
            <person name="Ptak J."/>
            <person name="Silliman N."/>
            <person name="Szabo S."/>
            <person name="Buckhaults P."/>
            <person name="Farrell C."/>
            <person name="Meeh P."/>
            <person name="Markowitz S.D."/>
            <person name="Willis J."/>
            <person name="Dawson D."/>
            <person name="Willson J.K.V."/>
            <person name="Gazdar A.F."/>
            <person name="Hartigan J."/>
            <person name="Wu L."/>
            <person name="Liu C."/>
            <person name="Parmigiani G."/>
            <person name="Park B.H."/>
            <person name="Bachman K.E."/>
            <person name="Papadopoulos N."/>
            <person name="Vogelstein B."/>
            <person name="Kinzler K.W."/>
            <person name="Velculescu V.E."/>
        </authorList>
    </citation>
    <scope>VARIANTS [LARGE SCALE ANALYSIS] GLY-669 AND ILE-1875</scope>
</reference>
<reference key="6">
    <citation type="journal article" date="2019" name="J. Proteome Res.">
        <title>Cell Type-Specific Expression of Testis Elevated Genes Based on Transcriptomics and Antibody-Based Proteomics.</title>
        <authorList>
            <person name="Pineau C."/>
            <person name="Hikmet F."/>
            <person name="Zhang C."/>
            <person name="Oksvold P."/>
            <person name="Chen S."/>
            <person name="Fagerberg L."/>
            <person name="Uhlen M."/>
            <person name="Lindskog C."/>
        </authorList>
    </citation>
    <scope>SUBCELLULAR LOCATION</scope>
</reference>
<organism>
    <name type="scientific">Homo sapiens</name>
    <name type="common">Human</name>
    <dbReference type="NCBI Taxonomy" id="9606"/>
    <lineage>
        <taxon>Eukaryota</taxon>
        <taxon>Metazoa</taxon>
        <taxon>Chordata</taxon>
        <taxon>Craniata</taxon>
        <taxon>Vertebrata</taxon>
        <taxon>Euteleostomi</taxon>
        <taxon>Mammalia</taxon>
        <taxon>Eutheria</taxon>
        <taxon>Euarchontoglires</taxon>
        <taxon>Primates</taxon>
        <taxon>Haplorrhini</taxon>
        <taxon>Catarrhini</taxon>
        <taxon>Hominidae</taxon>
        <taxon>Homo</taxon>
    </lineage>
</organism>
<accession>Q9NTG1</accession>
<accession>B1AJY3</accession>
<accession>O95850</accession>
<dbReference type="EMBL" id="AF116458">
    <property type="protein sequence ID" value="AAD18021.1"/>
    <property type="molecule type" value="mRNA"/>
</dbReference>
<dbReference type="EMBL" id="AL031034">
    <property type="status" value="NOT_ANNOTATED_CDS"/>
    <property type="molecule type" value="Genomic_DNA"/>
</dbReference>
<dbReference type="EMBL" id="AL078611">
    <property type="status" value="NOT_ANNOTATED_CDS"/>
    <property type="molecule type" value="Genomic_DNA"/>
</dbReference>
<dbReference type="EMBL" id="Z93024">
    <property type="status" value="NOT_ANNOTATED_CDS"/>
    <property type="molecule type" value="Genomic_DNA"/>
</dbReference>
<dbReference type="EMBL" id="CH471138">
    <property type="protein sequence ID" value="EAW73411.1"/>
    <property type="molecule type" value="Genomic_DNA"/>
</dbReference>
<dbReference type="EMBL" id="AL137288">
    <property type="protein sequence ID" value="CAB70680.1"/>
    <property type="molecule type" value="mRNA"/>
</dbReference>
<dbReference type="CCDS" id="CCDS14073.1"/>
<dbReference type="PIR" id="T46355">
    <property type="entry name" value="T46355"/>
</dbReference>
<dbReference type="RefSeq" id="NP_006062.1">
    <property type="nucleotide sequence ID" value="NM_006071.2"/>
</dbReference>
<dbReference type="SMR" id="Q9NTG1"/>
<dbReference type="BioGRID" id="115625">
    <property type="interactions" value="8"/>
</dbReference>
<dbReference type="FunCoup" id="Q9NTG1">
    <property type="interactions" value="64"/>
</dbReference>
<dbReference type="IntAct" id="Q9NTG1">
    <property type="interactions" value="3"/>
</dbReference>
<dbReference type="STRING" id="9606.ENSP00000253255"/>
<dbReference type="GlyCosmos" id="Q9NTG1">
    <property type="glycosylation" value="17 sites, No reported glycans"/>
</dbReference>
<dbReference type="GlyGen" id="Q9NTG1">
    <property type="glycosylation" value="18 sites"/>
</dbReference>
<dbReference type="iPTMnet" id="Q9NTG1"/>
<dbReference type="PhosphoSitePlus" id="Q9NTG1"/>
<dbReference type="BioMuta" id="PKDREJ"/>
<dbReference type="DMDM" id="23396800"/>
<dbReference type="jPOST" id="Q9NTG1"/>
<dbReference type="MassIVE" id="Q9NTG1"/>
<dbReference type="PaxDb" id="9606-ENSP00000253255"/>
<dbReference type="PeptideAtlas" id="Q9NTG1"/>
<dbReference type="ProteomicsDB" id="82605"/>
<dbReference type="Antibodypedia" id="28028">
    <property type="antibodies" value="29 antibodies from 12 providers"/>
</dbReference>
<dbReference type="DNASU" id="10343"/>
<dbReference type="Ensembl" id="ENST00000253255.7">
    <property type="protein sequence ID" value="ENSP00000253255.5"/>
    <property type="gene ID" value="ENSG00000130943.7"/>
</dbReference>
<dbReference type="GeneID" id="10343"/>
<dbReference type="KEGG" id="hsa:10343"/>
<dbReference type="MANE-Select" id="ENST00000253255.7">
    <property type="protein sequence ID" value="ENSP00000253255.5"/>
    <property type="RefSeq nucleotide sequence ID" value="NM_006071.2"/>
    <property type="RefSeq protein sequence ID" value="NP_006062.1"/>
</dbReference>
<dbReference type="UCSC" id="uc003bhh.4">
    <property type="organism name" value="human"/>
</dbReference>
<dbReference type="AGR" id="HGNC:9015"/>
<dbReference type="CTD" id="10343"/>
<dbReference type="DisGeNET" id="10343"/>
<dbReference type="GeneCards" id="PKDREJ"/>
<dbReference type="HGNC" id="HGNC:9015">
    <property type="gene designation" value="PKDREJ"/>
</dbReference>
<dbReference type="HPA" id="ENSG00000130943">
    <property type="expression patterns" value="Tissue enriched (testis)"/>
</dbReference>
<dbReference type="MIM" id="604670">
    <property type="type" value="gene"/>
</dbReference>
<dbReference type="neXtProt" id="NX_Q9NTG1"/>
<dbReference type="OpenTargets" id="ENSG00000130943"/>
<dbReference type="PharmGKB" id="PA33347"/>
<dbReference type="VEuPathDB" id="HostDB:ENSG00000130943"/>
<dbReference type="eggNOG" id="KOG3599">
    <property type="taxonomic scope" value="Eukaryota"/>
</dbReference>
<dbReference type="GeneTree" id="ENSGT00940000162080"/>
<dbReference type="HOGENOM" id="CLU_001765_0_0_1"/>
<dbReference type="InParanoid" id="Q9NTG1"/>
<dbReference type="OMA" id="KWPWASG"/>
<dbReference type="OrthoDB" id="2121937at2759"/>
<dbReference type="PAN-GO" id="Q9NTG1">
    <property type="GO annotations" value="3 GO annotations based on evolutionary models"/>
</dbReference>
<dbReference type="PhylomeDB" id="Q9NTG1"/>
<dbReference type="TreeFam" id="TF316484"/>
<dbReference type="PathwayCommons" id="Q9NTG1"/>
<dbReference type="SignaLink" id="Q9NTG1"/>
<dbReference type="BioGRID-ORCS" id="10343">
    <property type="hits" value="8 hits in 1136 CRISPR screens"/>
</dbReference>
<dbReference type="GenomeRNAi" id="10343"/>
<dbReference type="Pharos" id="Q9NTG1">
    <property type="development level" value="Tdark"/>
</dbReference>
<dbReference type="PRO" id="PR:Q9NTG1"/>
<dbReference type="Proteomes" id="UP000005640">
    <property type="component" value="Chromosome 22"/>
</dbReference>
<dbReference type="RNAct" id="Q9NTG1">
    <property type="molecule type" value="protein"/>
</dbReference>
<dbReference type="Bgee" id="ENSG00000130943">
    <property type="expression patterns" value="Expressed in adult organism and 50 other cell types or tissues"/>
</dbReference>
<dbReference type="GO" id="GO:0002080">
    <property type="term" value="C:acrosomal membrane"/>
    <property type="evidence" value="ECO:0007669"/>
    <property type="project" value="UniProtKB-SubCell"/>
</dbReference>
<dbReference type="GO" id="GO:0016020">
    <property type="term" value="C:membrane"/>
    <property type="evidence" value="ECO:0000318"/>
    <property type="project" value="GO_Central"/>
</dbReference>
<dbReference type="GO" id="GO:0005634">
    <property type="term" value="C:nucleus"/>
    <property type="evidence" value="ECO:0000314"/>
    <property type="project" value="UniProtKB"/>
</dbReference>
<dbReference type="GO" id="GO:0097524">
    <property type="term" value="C:sperm plasma membrane"/>
    <property type="evidence" value="ECO:0000250"/>
    <property type="project" value="UniProtKB"/>
</dbReference>
<dbReference type="GO" id="GO:0005262">
    <property type="term" value="F:calcium channel activity"/>
    <property type="evidence" value="ECO:0000318"/>
    <property type="project" value="GO_Central"/>
</dbReference>
<dbReference type="GO" id="GO:0005509">
    <property type="term" value="F:calcium ion binding"/>
    <property type="evidence" value="ECO:0007669"/>
    <property type="project" value="InterPro"/>
</dbReference>
<dbReference type="GO" id="GO:0007340">
    <property type="term" value="P:acrosome reaction"/>
    <property type="evidence" value="ECO:0000304"/>
    <property type="project" value="ProtInc"/>
</dbReference>
<dbReference type="GO" id="GO:0050982">
    <property type="term" value="P:detection of mechanical stimulus"/>
    <property type="evidence" value="ECO:0000318"/>
    <property type="project" value="GO_Central"/>
</dbReference>
<dbReference type="GO" id="GO:0060046">
    <property type="term" value="P:regulation of acrosome reaction"/>
    <property type="evidence" value="ECO:0007669"/>
    <property type="project" value="Ensembl"/>
</dbReference>
<dbReference type="CDD" id="cd01752">
    <property type="entry name" value="PLAT_polycystin"/>
    <property type="match status" value="1"/>
</dbReference>
<dbReference type="FunFam" id="1.10.287.70:FF:000141">
    <property type="entry name" value="Polycystin family receptor for egg jelly"/>
    <property type="match status" value="1"/>
</dbReference>
<dbReference type="FunFam" id="2.60.60.20:FF:000016">
    <property type="entry name" value="Polycystin family receptor for egg jelly"/>
    <property type="match status" value="1"/>
</dbReference>
<dbReference type="Gene3D" id="1.10.287.70">
    <property type="match status" value="1"/>
</dbReference>
<dbReference type="Gene3D" id="2.60.60.20">
    <property type="entry name" value="PLAT/LH2 domain"/>
    <property type="match status" value="1"/>
</dbReference>
<dbReference type="InterPro" id="IPR000203">
    <property type="entry name" value="GPS"/>
</dbReference>
<dbReference type="InterPro" id="IPR002859">
    <property type="entry name" value="PKD/REJ-like"/>
</dbReference>
<dbReference type="InterPro" id="IPR013122">
    <property type="entry name" value="PKD1_2_channel"/>
</dbReference>
<dbReference type="InterPro" id="IPR003915">
    <property type="entry name" value="PKD_2"/>
</dbReference>
<dbReference type="InterPro" id="IPR001024">
    <property type="entry name" value="PLAT/LH2_dom"/>
</dbReference>
<dbReference type="InterPro" id="IPR036392">
    <property type="entry name" value="PLAT/LH2_dom_sf"/>
</dbReference>
<dbReference type="InterPro" id="IPR042060">
    <property type="entry name" value="PLAT_polycystin1"/>
</dbReference>
<dbReference type="InterPro" id="IPR051223">
    <property type="entry name" value="Polycystin"/>
</dbReference>
<dbReference type="InterPro" id="IPR046791">
    <property type="entry name" value="Polycystin_dom"/>
</dbReference>
<dbReference type="InterPro" id="IPR014010">
    <property type="entry name" value="REJ_dom"/>
</dbReference>
<dbReference type="PANTHER" id="PTHR10877">
    <property type="entry name" value="POLYCYSTIN FAMILY MEMBER"/>
    <property type="match status" value="1"/>
</dbReference>
<dbReference type="PANTHER" id="PTHR10877:SF185">
    <property type="entry name" value="POLYCYSTIN FAMILY RECEPTOR FOR EGG JELLY"/>
    <property type="match status" value="1"/>
</dbReference>
<dbReference type="Pfam" id="PF08016">
    <property type="entry name" value="PKD_channel"/>
    <property type="match status" value="1"/>
</dbReference>
<dbReference type="Pfam" id="PF01477">
    <property type="entry name" value="PLAT"/>
    <property type="match status" value="1"/>
</dbReference>
<dbReference type="Pfam" id="PF20519">
    <property type="entry name" value="Polycystin_dom"/>
    <property type="match status" value="1"/>
</dbReference>
<dbReference type="Pfam" id="PF02010">
    <property type="entry name" value="REJ"/>
    <property type="match status" value="1"/>
</dbReference>
<dbReference type="PRINTS" id="PR01433">
    <property type="entry name" value="POLYCYSTIN2"/>
</dbReference>
<dbReference type="SMART" id="SM00303">
    <property type="entry name" value="GPS"/>
    <property type="match status" value="1"/>
</dbReference>
<dbReference type="SMART" id="SM00308">
    <property type="entry name" value="LH2"/>
    <property type="match status" value="1"/>
</dbReference>
<dbReference type="SUPFAM" id="SSF49723">
    <property type="entry name" value="Lipase/lipooxygenase domain (PLAT/LH2 domain)"/>
    <property type="match status" value="1"/>
</dbReference>
<dbReference type="PROSITE" id="PS50095">
    <property type="entry name" value="PLAT"/>
    <property type="match status" value="1"/>
</dbReference>
<dbReference type="PROSITE" id="PS51111">
    <property type="entry name" value="REJ"/>
    <property type="match status" value="1"/>
</dbReference>
<evidence type="ECO:0000250" key="1">
    <source>
        <dbReference type="UniProtKB" id="Q9Z0T6"/>
    </source>
</evidence>
<evidence type="ECO:0000255" key="2"/>
<evidence type="ECO:0000255" key="3">
    <source>
        <dbReference type="PROSITE-ProRule" id="PRU00152"/>
    </source>
</evidence>
<evidence type="ECO:0000255" key="4">
    <source>
        <dbReference type="PROSITE-ProRule" id="PRU00511"/>
    </source>
</evidence>
<evidence type="ECO:0000256" key="5">
    <source>
        <dbReference type="SAM" id="MobiDB-lite"/>
    </source>
</evidence>
<evidence type="ECO:0000269" key="6">
    <source>
    </source>
</evidence>
<evidence type="ECO:0000269" key="7">
    <source>
    </source>
</evidence>
<evidence type="ECO:0000269" key="8">
    <source>
    </source>
</evidence>
<evidence type="ECO:0000305" key="9"/>
<evidence type="ECO:0000312" key="10">
    <source>
        <dbReference type="HGNC" id="HGNC:9015"/>
    </source>
</evidence>
<feature type="signal peptide" evidence="2">
    <location>
        <begin position="1"/>
        <end position="19"/>
    </location>
</feature>
<feature type="chain" id="PRO_0000024299" description="Polycystin family receptor for egg jelly">
    <location>
        <begin position="20"/>
        <end position="2253"/>
    </location>
</feature>
<feature type="topological domain" description="Extracellular" evidence="2">
    <location>
        <begin position="20"/>
        <end position="1184"/>
    </location>
</feature>
<feature type="transmembrane region" description="Helical" evidence="2">
    <location>
        <begin position="1185"/>
        <end position="1205"/>
    </location>
</feature>
<feature type="topological domain" description="Cytoplasmic" evidence="2">
    <location>
        <begin position="1206"/>
        <end position="1389"/>
    </location>
</feature>
<feature type="transmembrane region" description="Helical" evidence="2">
    <location>
        <begin position="1390"/>
        <end position="1410"/>
    </location>
</feature>
<feature type="topological domain" description="Extracellular" evidence="2">
    <location>
        <begin position="1411"/>
        <end position="1427"/>
    </location>
</feature>
<feature type="transmembrane region" description="Helical" evidence="2">
    <location>
        <begin position="1428"/>
        <end position="1448"/>
    </location>
</feature>
<feature type="topological domain" description="Cytoplasmic" evidence="2">
    <location>
        <begin position="1449"/>
        <end position="1576"/>
    </location>
</feature>
<feature type="transmembrane region" description="Helical" evidence="2">
    <location>
        <begin position="1577"/>
        <end position="1597"/>
    </location>
</feature>
<feature type="topological domain" description="Extracellular" evidence="2">
    <location>
        <begin position="1598"/>
        <end position="1607"/>
    </location>
</feature>
<feature type="transmembrane region" description="Helical" evidence="2">
    <location>
        <begin position="1608"/>
        <end position="1628"/>
    </location>
</feature>
<feature type="topological domain" description="Cytoplasmic" evidence="2">
    <location>
        <begin position="1629"/>
        <end position="1708"/>
    </location>
</feature>
<feature type="transmembrane region" description="Helical" evidence="2">
    <location>
        <begin position="1709"/>
        <end position="1729"/>
    </location>
</feature>
<feature type="topological domain" description="Extracellular" evidence="2">
    <location>
        <begin position="1730"/>
        <end position="1966"/>
    </location>
</feature>
<feature type="transmembrane region" description="Helical" evidence="2">
    <location>
        <begin position="1967"/>
        <end position="1987"/>
    </location>
</feature>
<feature type="topological domain" description="Cytoplasmic" evidence="2">
    <location>
        <begin position="1988"/>
        <end position="1996"/>
    </location>
</feature>
<feature type="transmembrane region" description="Helical" evidence="2">
    <location>
        <begin position="1997"/>
        <end position="2017"/>
    </location>
</feature>
<feature type="topological domain" description="Extracellular" evidence="2">
    <location>
        <begin position="2018"/>
        <end position="2042"/>
    </location>
</feature>
<feature type="transmembrane region" description="Helical" evidence="2">
    <location>
        <begin position="2043"/>
        <end position="2063"/>
    </location>
</feature>
<feature type="topological domain" description="Cytoplasmic" evidence="2">
    <location>
        <begin position="2064"/>
        <end position="2091"/>
    </location>
</feature>
<feature type="transmembrane region" description="Helical" evidence="2">
    <location>
        <begin position="2092"/>
        <end position="2112"/>
    </location>
</feature>
<feature type="topological domain" description="Extracellular" evidence="2">
    <location>
        <begin position="2113"/>
        <end position="2145"/>
    </location>
</feature>
<feature type="transmembrane region" description="Helical" evidence="2">
    <location>
        <begin position="2146"/>
        <end position="2166"/>
    </location>
</feature>
<feature type="topological domain" description="Cytoplasmic" evidence="2">
    <location>
        <begin position="2167"/>
        <end position="2253"/>
    </location>
</feature>
<feature type="domain" description="REJ" evidence="4">
    <location>
        <begin position="215"/>
        <end position="913"/>
    </location>
</feature>
<feature type="domain" description="PLAT" evidence="3">
    <location>
        <begin position="1230"/>
        <end position="1347"/>
    </location>
</feature>
<feature type="region of interest" description="Disordered" evidence="5">
    <location>
        <begin position="154"/>
        <end position="177"/>
    </location>
</feature>
<feature type="region of interest" description="Disordered" evidence="5">
    <location>
        <begin position="1494"/>
        <end position="1562"/>
    </location>
</feature>
<feature type="compositionally biased region" description="Low complexity" evidence="5">
    <location>
        <begin position="154"/>
        <end position="169"/>
    </location>
</feature>
<feature type="compositionally biased region" description="Basic residues" evidence="5">
    <location>
        <begin position="1517"/>
        <end position="1527"/>
    </location>
</feature>
<feature type="compositionally biased region" description="Basic and acidic residues" evidence="5">
    <location>
        <begin position="1549"/>
        <end position="1558"/>
    </location>
</feature>
<feature type="glycosylation site" description="N-linked (GlcNAc...) asparagine" evidence="2">
    <location>
        <position position="197"/>
    </location>
</feature>
<feature type="glycosylation site" description="N-linked (GlcNAc...) asparagine" evidence="2">
    <location>
        <position position="242"/>
    </location>
</feature>
<feature type="glycosylation site" description="N-linked (GlcNAc...) asparagine" evidence="2">
    <location>
        <position position="295"/>
    </location>
</feature>
<feature type="glycosylation site" description="N-linked (GlcNAc...) asparagine" evidence="2">
    <location>
        <position position="306"/>
    </location>
</feature>
<feature type="glycosylation site" description="N-linked (GlcNAc...) asparagine" evidence="2">
    <location>
        <position position="345"/>
    </location>
</feature>
<feature type="glycosylation site" description="N-linked (GlcNAc...) asparagine" evidence="2">
    <location>
        <position position="349"/>
    </location>
</feature>
<feature type="glycosylation site" description="N-linked (GlcNAc...) asparagine" evidence="2">
    <location>
        <position position="481"/>
    </location>
</feature>
<feature type="glycosylation site" description="N-linked (GlcNAc...) asparagine" evidence="2">
    <location>
        <position position="674"/>
    </location>
</feature>
<feature type="glycosylation site" description="N-linked (GlcNAc...) asparagine" evidence="2">
    <location>
        <position position="849"/>
    </location>
</feature>
<feature type="glycosylation site" description="N-linked (GlcNAc...) asparagine" evidence="2">
    <location>
        <position position="890"/>
    </location>
</feature>
<feature type="glycosylation site" description="N-linked (GlcNAc...) asparagine" evidence="2">
    <location>
        <position position="923"/>
    </location>
</feature>
<feature type="glycosylation site" description="N-linked (GlcNAc...) asparagine" evidence="2">
    <location>
        <position position="939"/>
    </location>
</feature>
<feature type="glycosylation site" description="N-linked (GlcNAc...) asparagine" evidence="2">
    <location>
        <position position="958"/>
    </location>
</feature>
<feature type="glycosylation site" description="N-linked (GlcNAc...) asparagine" evidence="2">
    <location>
        <position position="965"/>
    </location>
</feature>
<feature type="glycosylation site" description="N-linked (GlcNAc...) asparagine" evidence="2">
    <location>
        <position position="1836"/>
    </location>
</feature>
<feature type="glycosylation site" description="N-linked (GlcNAc...) asparagine" evidence="2">
    <location>
        <position position="1893"/>
    </location>
</feature>
<feature type="glycosylation site" description="N-linked (GlcNAc...) asparagine" evidence="2">
    <location>
        <position position="1944"/>
    </location>
</feature>
<feature type="sequence variant" id="VAR_059550" description="In dbSNP:rs7293071.">
    <original>V</original>
    <variation>A</variation>
    <location>
        <position position="26"/>
    </location>
</feature>
<feature type="sequence variant" id="VAR_050544" description="In dbSNP:rs6008394.">
    <original>R</original>
    <variation>Q</variation>
    <location>
        <position position="528"/>
    </location>
</feature>
<feature type="sequence variant" id="VAR_036573" description="In a breast cancer sample; somatic mutation." evidence="6">
    <original>A</original>
    <variation>G</variation>
    <location>
        <position position="669"/>
    </location>
</feature>
<feature type="sequence variant" id="VAR_050545" description="In dbSNP:rs6519993.">
    <original>L</original>
    <variation>P</variation>
    <location>
        <position position="914"/>
    </location>
</feature>
<feature type="sequence variant" id="VAR_050546" description="In dbSNP:rs7291444.">
    <original>T</original>
    <variation>P</variation>
    <location>
        <position position="992"/>
    </location>
</feature>
<feature type="sequence variant" id="VAR_050547" description="In dbSNP:rs34798212.">
    <original>V</original>
    <variation>A</variation>
    <location>
        <position position="993"/>
    </location>
</feature>
<feature type="sequence variant" id="VAR_050548" description="In dbSNP:rs6008384.">
    <original>N</original>
    <variation>S</variation>
    <location>
        <position position="1091"/>
    </location>
</feature>
<feature type="sequence variant" id="VAR_034386" description="In dbSNP:rs36125344.">
    <original>I</original>
    <variation>M</variation>
    <location>
        <position position="1147"/>
    </location>
</feature>
<feature type="sequence variant" id="VAR_050549" description="In dbSNP:rs35276226.">
    <original>N</original>
    <variation>D</variation>
    <location>
        <position position="1411"/>
    </location>
</feature>
<feature type="sequence variant" id="VAR_050550" description="In dbSNP:rs4823496.">
    <original>I</original>
    <variation>M</variation>
    <location>
        <position position="1528"/>
    </location>
</feature>
<feature type="sequence variant" id="VAR_050551" description="In dbSNP:rs9626829.">
    <original>V</original>
    <variation>I</variation>
    <location>
        <position position="1729"/>
    </location>
</feature>
<feature type="sequence variant" id="VAR_036574" description="In a breast cancer sample; somatic mutation; dbSNP:rs1203491707." evidence="6">
    <original>T</original>
    <variation>I</variation>
    <location>
        <position position="1875"/>
    </location>
</feature>
<comment type="function">
    <text evidence="1">Testis-specific protein that controls sperm transport and the timing of zona pellucida-evoked exocytosis of the sperm acrosome.</text>
</comment>
<comment type="subcellular location">
    <subcellularLocation>
        <location evidence="1">Cell membrane</location>
        <topology evidence="2">Multi-pass membrane protein</topology>
    </subcellularLocation>
    <subcellularLocation>
        <location evidence="1">Cytoplasmic vesicle</location>
        <location evidence="1">Secretory vesicle</location>
        <location evidence="1">Acrosome membrane</location>
        <topology evidence="2">Multi-pass membrane protein</topology>
    </subcellularLocation>
    <subcellularLocation>
        <location evidence="7">Nucleus</location>
    </subcellularLocation>
</comment>
<comment type="tissue specificity">
    <text evidence="8">Exclusively expressed in testis.</text>
</comment>
<comment type="similarity">
    <text evidence="9">Belongs to the polycystin family.</text>
</comment>
<name>PKDRE_HUMAN</name>
<proteinExistence type="evidence at protein level"/>